<protein>
    <recommendedName>
        <fullName>NADPH:adrenodoxin oxidoreductase, mitochondrial</fullName>
        <shortName>AR</shortName>
        <shortName evidence="14">Adrenodoxin reductase</shortName>
        <ecNumber evidence="1">1.18.1.6</ecNumber>
    </recommendedName>
    <alternativeName>
        <fullName>Ferredoxin--NADP(+) reductase</fullName>
        <shortName>Ferredoxin reductase</shortName>
        <ecNumber evidence="11">1.18.1.-</ecNumber>
    </alternativeName>
</protein>
<name>ADRO_HUMAN</name>
<accession>P22570</accession>
<accession>B4DDI7</accession>
<accession>B4DHX5</accession>
<accession>B4DQQ4</accession>
<accession>B4DX24</accession>
<accession>B7Z7G2</accession>
<accession>E7EQC1</accession>
<accession>Q13716</accession>
<accession>Q4PJI0</accession>
<accession>Q9BU12</accession>
<keyword id="KW-0025">Alternative splicing</keyword>
<keyword id="KW-0153">Cholesterol metabolism</keyword>
<keyword id="KW-0209">Deafness</keyword>
<keyword id="KW-0225">Disease variant</keyword>
<keyword id="KW-0249">Electron transport</keyword>
<keyword id="KW-0274">FAD</keyword>
<keyword id="KW-0285">Flavoprotein</keyword>
<keyword id="KW-0443">Lipid metabolism</keyword>
<keyword id="KW-0472">Membrane</keyword>
<keyword id="KW-0496">Mitochondrion</keyword>
<keyword id="KW-0999">Mitochondrion inner membrane</keyword>
<keyword id="KW-0521">NADP</keyword>
<keyword id="KW-0523">Neurodegeneration</keyword>
<keyword id="KW-0622">Neuropathy</keyword>
<keyword id="KW-0560">Oxidoreductase</keyword>
<keyword id="KW-0597">Phosphoprotein</keyword>
<keyword id="KW-1267">Proteomics identification</keyword>
<keyword id="KW-1185">Reference proteome</keyword>
<keyword id="KW-0753">Steroid metabolism</keyword>
<keyword id="KW-1207">Sterol metabolism</keyword>
<keyword id="KW-0809">Transit peptide</keyword>
<keyword id="KW-0813">Transport</keyword>
<comment type="function">
    <text evidence="1 11">Serves as the first electron transfer protein in all the mitochondrial P450 systems including cholesterol side chain cleavage in all steroidogenic tissues, steroid 11-beta hydroxylation in the adrenal cortex, 25-OH-vitamin D3-24 hydroxylation in the kidney, and sterol C-27 hydroxylation in the liver (By similarity). Also acts as a ferredoxin--NADP(+) reductase essential for coenzyme Q biosynthesis: together with FDX2, transfers the electrons required for the hydroxylation reaction performed by COQ6 (PubMed:38425362).</text>
</comment>
<comment type="catalytic activity">
    <reaction evidence="1">
        <text>2 reduced [adrenodoxin] + NADP(+) + H(+) = 2 oxidized [adrenodoxin] + NADPH</text>
        <dbReference type="Rhea" id="RHEA:42312"/>
        <dbReference type="Rhea" id="RHEA-COMP:9998"/>
        <dbReference type="Rhea" id="RHEA-COMP:9999"/>
        <dbReference type="ChEBI" id="CHEBI:15378"/>
        <dbReference type="ChEBI" id="CHEBI:33737"/>
        <dbReference type="ChEBI" id="CHEBI:33738"/>
        <dbReference type="ChEBI" id="CHEBI:57783"/>
        <dbReference type="ChEBI" id="CHEBI:58349"/>
        <dbReference type="EC" id="1.18.1.6"/>
    </reaction>
</comment>
<comment type="catalytic activity">
    <reaction evidence="11">
        <text>2 reduced [2Fe-2S]-[ferredoxin] + NADP(+) + H(+) = 2 oxidized [2Fe-2S]-[ferredoxin] + NADPH</text>
        <dbReference type="Rhea" id="RHEA:20125"/>
        <dbReference type="Rhea" id="RHEA-COMP:10000"/>
        <dbReference type="Rhea" id="RHEA-COMP:10001"/>
        <dbReference type="ChEBI" id="CHEBI:15378"/>
        <dbReference type="ChEBI" id="CHEBI:33737"/>
        <dbReference type="ChEBI" id="CHEBI:33738"/>
        <dbReference type="ChEBI" id="CHEBI:57783"/>
        <dbReference type="ChEBI" id="CHEBI:58349"/>
    </reaction>
</comment>
<comment type="cofactor">
    <cofactor evidence="1">
        <name>FAD</name>
        <dbReference type="ChEBI" id="CHEBI:57692"/>
    </cofactor>
</comment>
<comment type="pathway">
    <text evidence="1">Steroid metabolism; cholesterol metabolism.</text>
</comment>
<comment type="subunit">
    <text evidence="1">Monomer. Interacts directly with FDX1.</text>
</comment>
<comment type="subcellular location">
    <subcellularLocation>
        <location evidence="6">Mitochondrion</location>
    </subcellularLocation>
    <subcellularLocation>
        <location evidence="2">Mitochondrion inner membrane</location>
        <topology evidence="15">Peripheral membrane protein</topology>
    </subcellularLocation>
</comment>
<comment type="alternative products">
    <event type="alternative splicing"/>
    <isoform>
        <id>P22570-1</id>
        <name>Short</name>
        <sequence type="displayed"/>
    </isoform>
    <isoform>
        <id>P22570-2</id>
        <name>Long</name>
        <sequence type="described" ref="VSP_003416"/>
    </isoform>
    <isoform>
        <id>P22570-3</id>
        <name>3</name>
        <sequence type="described" ref="VSP_045135"/>
    </isoform>
    <isoform>
        <id>P22570-4</id>
        <name>4</name>
        <sequence type="described" ref="VSP_046669"/>
    </isoform>
    <isoform>
        <id>P22570-5</id>
        <name>5</name>
        <sequence type="described" ref="VSP_046673"/>
    </isoform>
    <isoform>
        <id>P22570-6</id>
        <name>6</name>
        <sequence type="described" ref="VSP_046671 VSP_046672"/>
    </isoform>
    <isoform>
        <id>P22570-7</id>
        <name>7</name>
        <sequence type="described" ref="VSP_046670"/>
    </isoform>
</comment>
<comment type="disease" evidence="5">
    <disease id="DI-05116">
        <name>Auditory neuropathy and optic atrophy</name>
        <acronym>ANOA</acronym>
        <description>An autosomal recessive disease characterized by hearing loss, visual impairment and optic atrophy, with onset in the first or second decades of life. Optic atrophy is caused by degeneration of nerve fibers which arise in the retina and converge to form the optic disk, optic nerve, optic chiasm and optic tracts.</description>
        <dbReference type="MIM" id="617717"/>
    </disease>
    <text>The disease is caused by variants affecting the gene represented in this entry.</text>
</comment>
<comment type="disease" evidence="6 7 8 9 10">
    <disease id="DI-06923">
        <name>Multiple mitochondrial dysfunctions syndrome 9B</name>
        <acronym>MMDS9B</acronym>
        <description>An autosomal recessive disorder characterized by optic and/or auditory neuropathy with onset in the first two decades of life, in some cases associated with developmental delay or regression, global hypotonia, pyramidal, cerebellar signs, and seizures.</description>
        <dbReference type="MIM" id="620887"/>
    </disease>
    <text>The disease is caused by variants affecting the gene represented in this entry.</text>
</comment>
<comment type="miscellaneous">
    <molecule>Isoform Long</molecule>
    <text evidence="15">Represents 10-20% of all adrenodoxin reductase mRNAs and seems to be inactive.</text>
</comment>
<comment type="similarity">
    <text evidence="15">Belongs to the ferredoxin--NADP reductase type 1 family.</text>
</comment>
<sequence length="491" mass="53837">MASRCWRWWGWSAWPRTRLPPAGSTPSFCHHFSTQEKTPQICVVGSGPAGFYTAQHLLKHPQAHVDIYEKQPVPFGLVRFGVAPDHPEVKNVINTFTQTAHSGRCAFWGNVEVGRDVTVPELREAYHAVVLSYGAEDHRALEIPGEELPGVCSARAFVGWYNGLPENQELEPDLSCDTAVILGQGNVALDVARILLTPPEHLERTDITKAALGVLRQSRVKTVWLVGRRGPLQVAFTIKELREMIQLPGARPILDPVDFLGLQDKIKEVPRPRKRLTELLLRTATEKPGPAEAARQASASRAWGLRFFRSPQQVLPSPDGRRAAGVRLAVTRLEGVDEATRAVPTGDMEDLPCGLVLSSIGYKSRPVDPSVPFDSKLGVIPNVEGRVMDVPGLYCSGWVKRGPTGVIATTMTDSFLTGQMLLQDLKAGLLPSGPRPGYAAIQALLSSRGVRPVSFSDWEKLDAEEVARGQGTGKPREKLVDPQEMLRLLGH</sequence>
<dbReference type="EC" id="1.18.1.6" evidence="1"/>
<dbReference type="EC" id="1.18.1.-" evidence="11"/>
<dbReference type="EMBL" id="J03826">
    <property type="protein sequence ID" value="AAB59498.1"/>
    <property type="molecule type" value="mRNA"/>
</dbReference>
<dbReference type="EMBL" id="J03826">
    <property type="protein sequence ID" value="AAB59497.1"/>
    <property type="molecule type" value="mRNA"/>
</dbReference>
<dbReference type="EMBL" id="M58509">
    <property type="protein sequence ID" value="AAA51668.1"/>
    <property type="molecule type" value="Genomic_DNA"/>
</dbReference>
<dbReference type="EMBL" id="M58508">
    <property type="protein sequence ID" value="AAA51668.1"/>
    <property type="status" value="JOINED"/>
    <property type="molecule type" value="Genomic_DNA"/>
</dbReference>
<dbReference type="EMBL" id="M58509">
    <property type="protein sequence ID" value="AAA51669.1"/>
    <property type="molecule type" value="Genomic_DNA"/>
</dbReference>
<dbReference type="EMBL" id="M58508">
    <property type="protein sequence ID" value="AAA51669.1"/>
    <property type="status" value="JOINED"/>
    <property type="molecule type" value="Genomic_DNA"/>
</dbReference>
<dbReference type="EMBL" id="DQ085780">
    <property type="protein sequence ID" value="AAY68215.1"/>
    <property type="molecule type" value="Genomic_DNA"/>
</dbReference>
<dbReference type="EMBL" id="AK293208">
    <property type="protein sequence ID" value="BAG56748.1"/>
    <property type="molecule type" value="mRNA"/>
</dbReference>
<dbReference type="EMBL" id="AK295307">
    <property type="protein sequence ID" value="BAG58287.1"/>
    <property type="molecule type" value="mRNA"/>
</dbReference>
<dbReference type="EMBL" id="AK298908">
    <property type="protein sequence ID" value="BAG61016.1"/>
    <property type="molecule type" value="mRNA"/>
</dbReference>
<dbReference type="EMBL" id="AK301779">
    <property type="protein sequence ID" value="BAG63236.1"/>
    <property type="molecule type" value="mRNA"/>
</dbReference>
<dbReference type="EMBL" id="AK301977">
    <property type="protein sequence ID" value="BAH13598.1"/>
    <property type="molecule type" value="mRNA"/>
</dbReference>
<dbReference type="EMBL" id="AC068874">
    <property type="status" value="NOT_ANNOTATED_CDS"/>
    <property type="molecule type" value="Genomic_DNA"/>
</dbReference>
<dbReference type="EMBL" id="BC002960">
    <property type="protein sequence ID" value="AAH02960.1"/>
    <property type="molecule type" value="mRNA"/>
</dbReference>
<dbReference type="CCDS" id="CCDS11707.1">
    <molecule id="P22570-2"/>
</dbReference>
<dbReference type="CCDS" id="CCDS58591.1">
    <molecule id="P22570-4"/>
</dbReference>
<dbReference type="CCDS" id="CCDS58592.1">
    <molecule id="P22570-5"/>
</dbReference>
<dbReference type="CCDS" id="CCDS58593.1">
    <molecule id="P22570-1"/>
</dbReference>
<dbReference type="CCDS" id="CCDS58594.1">
    <molecule id="P22570-6"/>
</dbReference>
<dbReference type="CCDS" id="CCDS58595.1">
    <molecule id="P22570-3"/>
</dbReference>
<dbReference type="CCDS" id="CCDS58596.1">
    <molecule id="P22570-7"/>
</dbReference>
<dbReference type="PIR" id="A40487">
    <property type="entry name" value="A40487"/>
</dbReference>
<dbReference type="RefSeq" id="NP_001244941.2">
    <property type="nucleotide sequence ID" value="NM_001258012.3"/>
</dbReference>
<dbReference type="RefSeq" id="NP_001244942.2">
    <property type="nucleotide sequence ID" value="NM_001258013.3"/>
</dbReference>
<dbReference type="RefSeq" id="NP_001244943.2">
    <property type="nucleotide sequence ID" value="NM_001258014.3"/>
</dbReference>
<dbReference type="RefSeq" id="NP_001244944.1">
    <molecule id="P22570-6"/>
    <property type="nucleotide sequence ID" value="NM_001258015.3"/>
</dbReference>
<dbReference type="RefSeq" id="NP_001244945.2">
    <property type="nucleotide sequence ID" value="NM_001258016.3"/>
</dbReference>
<dbReference type="RefSeq" id="NP_004101.3">
    <property type="nucleotide sequence ID" value="NM_004110.5"/>
</dbReference>
<dbReference type="RefSeq" id="NP_077728.3">
    <property type="nucleotide sequence ID" value="NM_024417.4"/>
</dbReference>
<dbReference type="SMR" id="P22570"/>
<dbReference type="BioGRID" id="108523">
    <property type="interactions" value="75"/>
</dbReference>
<dbReference type="FunCoup" id="P22570">
    <property type="interactions" value="2031"/>
</dbReference>
<dbReference type="IntAct" id="P22570">
    <property type="interactions" value="37"/>
</dbReference>
<dbReference type="STRING" id="9606.ENSP00000416515"/>
<dbReference type="DrugBank" id="DB03147">
    <property type="generic name" value="Flavin adenine dinucleotide"/>
</dbReference>
<dbReference type="DrugBank" id="DB03461">
    <property type="generic name" value="Nicotinamide adenine dinucleotide phosphate"/>
</dbReference>
<dbReference type="GlyGen" id="P22570">
    <property type="glycosylation" value="2 sites, 1 O-linked glycan (1 site)"/>
</dbReference>
<dbReference type="iPTMnet" id="P22570"/>
<dbReference type="PhosphoSitePlus" id="P22570"/>
<dbReference type="SwissPalm" id="P22570"/>
<dbReference type="BioMuta" id="FDXR"/>
<dbReference type="DMDM" id="85681283"/>
<dbReference type="REPRODUCTION-2DPAGE" id="IPI00026958"/>
<dbReference type="jPOST" id="P22570"/>
<dbReference type="MassIVE" id="P22570"/>
<dbReference type="PaxDb" id="9606-ENSP00000416515"/>
<dbReference type="PeptideAtlas" id="P22570"/>
<dbReference type="ProteomicsDB" id="17542"/>
<dbReference type="ProteomicsDB" id="4256"/>
<dbReference type="ProteomicsDB" id="4894"/>
<dbReference type="ProteomicsDB" id="54003">
    <molecule id="P22570-1"/>
</dbReference>
<dbReference type="ProteomicsDB" id="54004">
    <molecule id="P22570-2"/>
</dbReference>
<dbReference type="ProteomicsDB" id="6867"/>
<dbReference type="Pumba" id="P22570"/>
<dbReference type="Antibodypedia" id="3261">
    <property type="antibodies" value="280 antibodies from 29 providers"/>
</dbReference>
<dbReference type="DNASU" id="2232"/>
<dbReference type="Ensembl" id="ENST00000420580.6">
    <molecule id="P22570-6"/>
    <property type="protein sequence ID" value="ENSP00000414172.2"/>
    <property type="gene ID" value="ENSG00000161513.12"/>
</dbReference>
<dbReference type="GeneID" id="2232"/>
<dbReference type="KEGG" id="hsa:2232"/>
<dbReference type="UCSC" id="uc002jlx.4">
    <molecule id="P22570-1"/>
    <property type="organism name" value="human"/>
</dbReference>
<dbReference type="AGR" id="HGNC:3642"/>
<dbReference type="CTD" id="2232"/>
<dbReference type="DisGeNET" id="2232"/>
<dbReference type="GeneCards" id="FDXR"/>
<dbReference type="HGNC" id="HGNC:3642">
    <property type="gene designation" value="FDXR"/>
</dbReference>
<dbReference type="HPA" id="ENSG00000161513">
    <property type="expression patterns" value="Tissue enriched (adrenal)"/>
</dbReference>
<dbReference type="MalaCards" id="FDXR"/>
<dbReference type="MIM" id="103270">
    <property type="type" value="gene"/>
</dbReference>
<dbReference type="MIM" id="617717">
    <property type="type" value="phenotype"/>
</dbReference>
<dbReference type="MIM" id="620887">
    <property type="type" value="phenotype"/>
</dbReference>
<dbReference type="neXtProt" id="NX_P22570"/>
<dbReference type="OpenTargets" id="ENSG00000161513"/>
<dbReference type="Orphanet" id="542585">
    <property type="disease" value="Auditory neuropathy-optic atrophy syndrome"/>
</dbReference>
<dbReference type="Orphanet" id="543470">
    <property type="disease" value="Optic atrophy-ataxia-peripheral neuropathy-global developmental delay syndrome"/>
</dbReference>
<dbReference type="PharmGKB" id="PA28086"/>
<dbReference type="VEuPathDB" id="HostDB:ENSG00000161513"/>
<dbReference type="eggNOG" id="KOG1800">
    <property type="taxonomic scope" value="Eukaryota"/>
</dbReference>
<dbReference type="GeneTree" id="ENSGT00390000013574"/>
<dbReference type="HOGENOM" id="CLU_024722_3_1_1"/>
<dbReference type="InParanoid" id="P22570"/>
<dbReference type="OrthoDB" id="333024at2759"/>
<dbReference type="PAN-GO" id="P22570">
    <property type="GO annotations" value="3 GO annotations based on evolutionary models"/>
</dbReference>
<dbReference type="PhylomeDB" id="P22570"/>
<dbReference type="TreeFam" id="TF314193"/>
<dbReference type="BioCyc" id="MetaCyc:HS08587-MONOMER"/>
<dbReference type="PathwayCommons" id="P22570"/>
<dbReference type="Reactome" id="R-HSA-196108">
    <property type="pathway name" value="Pregnenolone biosynthesis"/>
</dbReference>
<dbReference type="Reactome" id="R-HSA-211976">
    <property type="pathway name" value="Endogenous sterols"/>
</dbReference>
<dbReference type="Reactome" id="R-HSA-2395516">
    <property type="pathway name" value="Electron transport from NADPH to Ferredoxin"/>
</dbReference>
<dbReference type="Reactome" id="R-HSA-5579026">
    <property type="pathway name" value="Defective CYP11A1 causes AICSR"/>
</dbReference>
<dbReference type="SignaLink" id="P22570"/>
<dbReference type="UniPathway" id="UPA00296"/>
<dbReference type="BioGRID-ORCS" id="2232">
    <property type="hits" value="485 hits in 1175 CRISPR screens"/>
</dbReference>
<dbReference type="GeneWiki" id="Adrenodoxin_reductase"/>
<dbReference type="GenomeRNAi" id="2232"/>
<dbReference type="Pharos" id="P22570">
    <property type="development level" value="Tbio"/>
</dbReference>
<dbReference type="PRO" id="PR:P22570"/>
<dbReference type="Proteomes" id="UP000005640">
    <property type="component" value="Chromosome 17"/>
</dbReference>
<dbReference type="RNAct" id="P22570">
    <property type="molecule type" value="protein"/>
</dbReference>
<dbReference type="Bgee" id="ENSG00000161513">
    <property type="expression patterns" value="Expressed in right adrenal gland cortex and 128 other cell types or tissues"/>
</dbReference>
<dbReference type="ExpressionAtlas" id="P22570">
    <property type="expression patterns" value="baseline and differential"/>
</dbReference>
<dbReference type="GO" id="GO:0005743">
    <property type="term" value="C:mitochondrial inner membrane"/>
    <property type="evidence" value="ECO:0007669"/>
    <property type="project" value="UniProtKB-SubCell"/>
</dbReference>
<dbReference type="GO" id="GO:0005759">
    <property type="term" value="C:mitochondrial matrix"/>
    <property type="evidence" value="ECO:0000304"/>
    <property type="project" value="Reactome"/>
</dbReference>
<dbReference type="GO" id="GO:0005739">
    <property type="term" value="C:mitochondrion"/>
    <property type="evidence" value="ECO:0000314"/>
    <property type="project" value="HPA"/>
</dbReference>
<dbReference type="GO" id="GO:0004324">
    <property type="term" value="F:ferredoxin-NADP+ reductase activity"/>
    <property type="evidence" value="ECO:0000314"/>
    <property type="project" value="UniProtKB"/>
</dbReference>
<dbReference type="GO" id="GO:0008203">
    <property type="term" value="P:cholesterol metabolic process"/>
    <property type="evidence" value="ECO:0007669"/>
    <property type="project" value="UniProtKB-UniPathway"/>
</dbReference>
<dbReference type="GO" id="GO:0006091">
    <property type="term" value="P:generation of precursor metabolites and energy"/>
    <property type="evidence" value="ECO:0000304"/>
    <property type="project" value="ProtInc"/>
</dbReference>
<dbReference type="GO" id="GO:0006694">
    <property type="term" value="P:steroid biosynthetic process"/>
    <property type="evidence" value="ECO:0000318"/>
    <property type="project" value="GO_Central"/>
</dbReference>
<dbReference type="GO" id="GO:0006744">
    <property type="term" value="P:ubiquinone biosynthetic process"/>
    <property type="evidence" value="ECO:0000314"/>
    <property type="project" value="UniProtKB"/>
</dbReference>
<dbReference type="FunFam" id="3.40.50.720:FF:000969">
    <property type="entry name" value="NADPH:adrenodoxin oxidoreductase, mitochondrial"/>
    <property type="match status" value="1"/>
</dbReference>
<dbReference type="FunFam" id="3.50.50.60:FF:000036">
    <property type="entry name" value="NADPH:adrenodoxin oxidoreductase, mitochondrial"/>
    <property type="match status" value="1"/>
</dbReference>
<dbReference type="Gene3D" id="3.50.50.60">
    <property type="entry name" value="FAD/NAD(P)-binding domain"/>
    <property type="match status" value="1"/>
</dbReference>
<dbReference type="Gene3D" id="3.40.50.720">
    <property type="entry name" value="NAD(P)-binding Rossmann-like Domain"/>
    <property type="match status" value="1"/>
</dbReference>
<dbReference type="InterPro" id="IPR036188">
    <property type="entry name" value="FAD/NAD-bd_sf"/>
</dbReference>
<dbReference type="InterPro" id="IPR055275">
    <property type="entry name" value="Ferredox_Rdtase"/>
</dbReference>
<dbReference type="InterPro" id="IPR021163">
    <property type="entry name" value="Ferredox_Rdtase_adrenod"/>
</dbReference>
<dbReference type="PANTHER" id="PTHR48467">
    <property type="entry name" value="GLUTAMATE SYNTHASE 1 [NADH], CHLOROPLASTIC-LIKE"/>
    <property type="match status" value="1"/>
</dbReference>
<dbReference type="PANTHER" id="PTHR48467:SF1">
    <property type="entry name" value="GLUTAMATE SYNTHASE 1 [NADH], CHLOROPLASTIC-LIKE"/>
    <property type="match status" value="1"/>
</dbReference>
<dbReference type="Pfam" id="PF13450">
    <property type="entry name" value="NAD_binding_8"/>
    <property type="match status" value="1"/>
</dbReference>
<dbReference type="PIRSF" id="PIRSF000362">
    <property type="entry name" value="FNR"/>
    <property type="match status" value="1"/>
</dbReference>
<dbReference type="PRINTS" id="PR00419">
    <property type="entry name" value="ADXRDTASE"/>
</dbReference>
<dbReference type="SUPFAM" id="SSF51905">
    <property type="entry name" value="FAD/NAD(P)-binding domain"/>
    <property type="match status" value="1"/>
</dbReference>
<dbReference type="SUPFAM" id="SSF51971">
    <property type="entry name" value="Nucleotide-binding domain"/>
    <property type="match status" value="2"/>
</dbReference>
<proteinExistence type="evidence at protein level"/>
<gene>
    <name evidence="16" type="primary">FDXR</name>
    <name type="synonym">ADXR</name>
</gene>
<reference key="1">
    <citation type="journal article" date="1988" name="Proc. Natl. Acad. Sci. U.S.A.">
        <title>Human adrenodoxin reductase: two mRNAs encoded by a single gene on chromosome 17cen--&gt;q25 are expressed in steroidogenic tissues.</title>
        <authorList>
            <person name="Solish S.B."/>
            <person name="Picado-Leonard J."/>
            <person name="Morel Y."/>
            <person name="Kuhn R.W."/>
            <person name="Mohandas T.K."/>
            <person name="Hanukoglu I."/>
            <person name="Miller W.L."/>
        </authorList>
    </citation>
    <scope>NUCLEOTIDE SEQUENCE [MRNA] (ISOFORMS SHORT AND LONG)</scope>
    <scope>VARIANT GLN-123</scope>
</reference>
<reference key="2">
    <citation type="journal article" date="1990" name="Proc. Natl. Acad. Sci. U.S.A.">
        <title>Cloning and sequence of the human adrenodoxin reductase gene.</title>
        <authorList>
            <person name="Lin D."/>
            <person name="Shi Y."/>
            <person name="Miller W.L."/>
        </authorList>
    </citation>
    <scope>NUCLEOTIDE SEQUENCE [GENOMIC DNA]</scope>
</reference>
<reference key="3">
    <citation type="submission" date="2005-06" db="EMBL/GenBank/DDBJ databases">
        <authorList>
            <consortium name="NIEHS SNPs program"/>
        </authorList>
    </citation>
    <scope>NUCLEOTIDE SEQUENCE [GENOMIC DNA]</scope>
    <scope>VARIANTS LEU-7; GLN-123; VAL-213; LEU-248; TRP-251; CYS-301; MET-345; SER-352 AND ALA-472</scope>
</reference>
<reference key="4">
    <citation type="journal article" date="2004" name="Nat. Genet.">
        <title>Complete sequencing and characterization of 21,243 full-length human cDNAs.</title>
        <authorList>
            <person name="Ota T."/>
            <person name="Suzuki Y."/>
            <person name="Nishikawa T."/>
            <person name="Otsuki T."/>
            <person name="Sugiyama T."/>
            <person name="Irie R."/>
            <person name="Wakamatsu A."/>
            <person name="Hayashi K."/>
            <person name="Sato H."/>
            <person name="Nagai K."/>
            <person name="Kimura K."/>
            <person name="Makita H."/>
            <person name="Sekine M."/>
            <person name="Obayashi M."/>
            <person name="Nishi T."/>
            <person name="Shibahara T."/>
            <person name="Tanaka T."/>
            <person name="Ishii S."/>
            <person name="Yamamoto J."/>
            <person name="Saito K."/>
            <person name="Kawai Y."/>
            <person name="Isono Y."/>
            <person name="Nakamura Y."/>
            <person name="Nagahari K."/>
            <person name="Murakami K."/>
            <person name="Yasuda T."/>
            <person name="Iwayanagi T."/>
            <person name="Wagatsuma M."/>
            <person name="Shiratori A."/>
            <person name="Sudo H."/>
            <person name="Hosoiri T."/>
            <person name="Kaku Y."/>
            <person name="Kodaira H."/>
            <person name="Kondo H."/>
            <person name="Sugawara M."/>
            <person name="Takahashi M."/>
            <person name="Kanda K."/>
            <person name="Yokoi T."/>
            <person name="Furuya T."/>
            <person name="Kikkawa E."/>
            <person name="Omura Y."/>
            <person name="Abe K."/>
            <person name="Kamihara K."/>
            <person name="Katsuta N."/>
            <person name="Sato K."/>
            <person name="Tanikawa M."/>
            <person name="Yamazaki M."/>
            <person name="Ninomiya K."/>
            <person name="Ishibashi T."/>
            <person name="Yamashita H."/>
            <person name="Murakawa K."/>
            <person name="Fujimori K."/>
            <person name="Tanai H."/>
            <person name="Kimata M."/>
            <person name="Watanabe M."/>
            <person name="Hiraoka S."/>
            <person name="Chiba Y."/>
            <person name="Ishida S."/>
            <person name="Ono Y."/>
            <person name="Takiguchi S."/>
            <person name="Watanabe S."/>
            <person name="Yosida M."/>
            <person name="Hotuta T."/>
            <person name="Kusano J."/>
            <person name="Kanehori K."/>
            <person name="Takahashi-Fujii A."/>
            <person name="Hara H."/>
            <person name="Tanase T.-O."/>
            <person name="Nomura Y."/>
            <person name="Togiya S."/>
            <person name="Komai F."/>
            <person name="Hara R."/>
            <person name="Takeuchi K."/>
            <person name="Arita M."/>
            <person name="Imose N."/>
            <person name="Musashino K."/>
            <person name="Yuuki H."/>
            <person name="Oshima A."/>
            <person name="Sasaki N."/>
            <person name="Aotsuka S."/>
            <person name="Yoshikawa Y."/>
            <person name="Matsunawa H."/>
            <person name="Ichihara T."/>
            <person name="Shiohata N."/>
            <person name="Sano S."/>
            <person name="Moriya S."/>
            <person name="Momiyama H."/>
            <person name="Satoh N."/>
            <person name="Takami S."/>
            <person name="Terashima Y."/>
            <person name="Suzuki O."/>
            <person name="Nakagawa S."/>
            <person name="Senoh A."/>
            <person name="Mizoguchi H."/>
            <person name="Goto Y."/>
            <person name="Shimizu F."/>
            <person name="Wakebe H."/>
            <person name="Hishigaki H."/>
            <person name="Watanabe T."/>
            <person name="Sugiyama A."/>
            <person name="Takemoto M."/>
            <person name="Kawakami B."/>
            <person name="Yamazaki M."/>
            <person name="Watanabe K."/>
            <person name="Kumagai A."/>
            <person name="Itakura S."/>
            <person name="Fukuzumi Y."/>
            <person name="Fujimori Y."/>
            <person name="Komiyama M."/>
            <person name="Tashiro H."/>
            <person name="Tanigami A."/>
            <person name="Fujiwara T."/>
            <person name="Ono T."/>
            <person name="Yamada K."/>
            <person name="Fujii Y."/>
            <person name="Ozaki K."/>
            <person name="Hirao M."/>
            <person name="Ohmori Y."/>
            <person name="Kawabata A."/>
            <person name="Hikiji T."/>
            <person name="Kobatake N."/>
            <person name="Inagaki H."/>
            <person name="Ikema Y."/>
            <person name="Okamoto S."/>
            <person name="Okitani R."/>
            <person name="Kawakami T."/>
            <person name="Noguchi S."/>
            <person name="Itoh T."/>
            <person name="Shigeta K."/>
            <person name="Senba T."/>
            <person name="Matsumura K."/>
            <person name="Nakajima Y."/>
            <person name="Mizuno T."/>
            <person name="Morinaga M."/>
            <person name="Sasaki M."/>
            <person name="Togashi T."/>
            <person name="Oyama M."/>
            <person name="Hata H."/>
            <person name="Watanabe M."/>
            <person name="Komatsu T."/>
            <person name="Mizushima-Sugano J."/>
            <person name="Satoh T."/>
            <person name="Shirai Y."/>
            <person name="Takahashi Y."/>
            <person name="Nakagawa K."/>
            <person name="Okumura K."/>
            <person name="Nagase T."/>
            <person name="Nomura N."/>
            <person name="Kikuchi H."/>
            <person name="Masuho Y."/>
            <person name="Yamashita R."/>
            <person name="Nakai K."/>
            <person name="Yada T."/>
            <person name="Nakamura Y."/>
            <person name="Ohara O."/>
            <person name="Isogai T."/>
            <person name="Sugano S."/>
        </authorList>
    </citation>
    <scope>NUCLEOTIDE SEQUENCE [LARGE SCALE MRNA] (ISOFORMS 3; 4; 5; 6 AND 7)</scope>
    <scope>VARIANT GLN-123</scope>
    <source>
        <tissue>Adrenal gland</tissue>
        <tissue>Caudate nucleus</tissue>
        <tissue>Testis</tissue>
    </source>
</reference>
<reference key="5">
    <citation type="journal article" date="2006" name="Nature">
        <title>DNA sequence of human chromosome 17 and analysis of rearrangement in the human lineage.</title>
        <authorList>
            <person name="Zody M.C."/>
            <person name="Garber M."/>
            <person name="Adams D.J."/>
            <person name="Sharpe T."/>
            <person name="Harrow J."/>
            <person name="Lupski J.R."/>
            <person name="Nicholson C."/>
            <person name="Searle S.M."/>
            <person name="Wilming L."/>
            <person name="Young S.K."/>
            <person name="Abouelleil A."/>
            <person name="Allen N.R."/>
            <person name="Bi W."/>
            <person name="Bloom T."/>
            <person name="Borowsky M.L."/>
            <person name="Bugalter B.E."/>
            <person name="Butler J."/>
            <person name="Chang J.L."/>
            <person name="Chen C.-K."/>
            <person name="Cook A."/>
            <person name="Corum B."/>
            <person name="Cuomo C.A."/>
            <person name="de Jong P.J."/>
            <person name="DeCaprio D."/>
            <person name="Dewar K."/>
            <person name="FitzGerald M."/>
            <person name="Gilbert J."/>
            <person name="Gibson R."/>
            <person name="Gnerre S."/>
            <person name="Goldstein S."/>
            <person name="Grafham D.V."/>
            <person name="Grocock R."/>
            <person name="Hafez N."/>
            <person name="Hagopian D.S."/>
            <person name="Hart E."/>
            <person name="Norman C.H."/>
            <person name="Humphray S."/>
            <person name="Jaffe D.B."/>
            <person name="Jones M."/>
            <person name="Kamal M."/>
            <person name="Khodiyar V.K."/>
            <person name="LaButti K."/>
            <person name="Laird G."/>
            <person name="Lehoczky J."/>
            <person name="Liu X."/>
            <person name="Lokyitsang T."/>
            <person name="Loveland J."/>
            <person name="Lui A."/>
            <person name="Macdonald P."/>
            <person name="Major J.E."/>
            <person name="Matthews L."/>
            <person name="Mauceli E."/>
            <person name="McCarroll S.A."/>
            <person name="Mihalev A.H."/>
            <person name="Mudge J."/>
            <person name="Nguyen C."/>
            <person name="Nicol R."/>
            <person name="O'Leary S.B."/>
            <person name="Osoegawa K."/>
            <person name="Schwartz D.C."/>
            <person name="Shaw-Smith C."/>
            <person name="Stankiewicz P."/>
            <person name="Steward C."/>
            <person name="Swarbreck D."/>
            <person name="Venkataraman V."/>
            <person name="Whittaker C.A."/>
            <person name="Yang X."/>
            <person name="Zimmer A.R."/>
            <person name="Bradley A."/>
            <person name="Hubbard T."/>
            <person name="Birren B.W."/>
            <person name="Rogers J."/>
            <person name="Lander E.S."/>
            <person name="Nusbaum C."/>
        </authorList>
    </citation>
    <scope>NUCLEOTIDE SEQUENCE [LARGE SCALE GENOMIC DNA]</scope>
</reference>
<reference key="6">
    <citation type="journal article" date="2004" name="Genome Res.">
        <title>The status, quality, and expansion of the NIH full-length cDNA project: the Mammalian Gene Collection (MGC).</title>
        <authorList>
            <consortium name="The MGC Project Team"/>
        </authorList>
    </citation>
    <scope>NUCLEOTIDE SEQUENCE [LARGE SCALE MRNA] (ISOFORM SHORT)</scope>
    <source>
        <tissue>Lung</tissue>
    </source>
</reference>
<reference key="7">
    <citation type="journal article" date="2011" name="BMC Syst. Biol.">
        <title>Initial characterization of the human central proteome.</title>
        <authorList>
            <person name="Burkard T.R."/>
            <person name="Planyavsky M."/>
            <person name="Kaupe I."/>
            <person name="Breitwieser F.P."/>
            <person name="Buerckstuemmer T."/>
            <person name="Bennett K.L."/>
            <person name="Superti-Furga G."/>
            <person name="Colinge J."/>
        </authorList>
    </citation>
    <scope>IDENTIFICATION BY MASS SPECTROMETRY [LARGE SCALE ANALYSIS]</scope>
</reference>
<reference key="8">
    <citation type="journal article" date="2013" name="J. Proteome Res.">
        <title>Toward a comprehensive characterization of a human cancer cell phosphoproteome.</title>
        <authorList>
            <person name="Zhou H."/>
            <person name="Di Palma S."/>
            <person name="Preisinger C."/>
            <person name="Peng M."/>
            <person name="Polat A.N."/>
            <person name="Heck A.J."/>
            <person name="Mohammed S."/>
        </authorList>
    </citation>
    <scope>PHOSPHORYLATION [LARGE SCALE ANALYSIS] AT SER-310 AND SER-317</scope>
    <scope>IDENTIFICATION BY MASS SPECTROMETRY [LARGE SCALE ANALYSIS]</scope>
    <source>
        <tissue>Erythroleukemia</tissue>
    </source>
</reference>
<reference key="9">
    <citation type="journal article" date="2014" name="J. Proteomics">
        <title>An enzyme assisted RP-RPLC approach for in-depth analysis of human liver phosphoproteome.</title>
        <authorList>
            <person name="Bian Y."/>
            <person name="Song C."/>
            <person name="Cheng K."/>
            <person name="Dong M."/>
            <person name="Wang F."/>
            <person name="Huang J."/>
            <person name="Sun D."/>
            <person name="Wang L."/>
            <person name="Ye M."/>
            <person name="Zou H."/>
        </authorList>
    </citation>
    <scope>IDENTIFICATION BY MASS SPECTROMETRY [LARGE SCALE ANALYSIS]</scope>
    <source>
        <tissue>Liver</tissue>
    </source>
</reference>
<reference key="10">
    <citation type="journal article" date="2015" name="Proteomics">
        <title>N-terminome analysis of the human mitochondrial proteome.</title>
        <authorList>
            <person name="Vaca Jacome A.S."/>
            <person name="Rabilloud T."/>
            <person name="Schaeffer-Reiss C."/>
            <person name="Rompais M."/>
            <person name="Ayoub D."/>
            <person name="Lane L."/>
            <person name="Bairoch A."/>
            <person name="Van Dorsselaer A."/>
            <person name="Carapito C."/>
        </authorList>
    </citation>
    <scope>IDENTIFICATION BY MASS SPECTROMETRY [LARGE SCALE ANALYSIS]</scope>
</reference>
<reference key="11">
    <citation type="journal article" date="2024" name="Nat. Catal.">
        <title>In vitro construction of the COQ metabolon unveils the molecular determinants of coenzyme Q biosynthesis.</title>
        <authorList>
            <person name="Nicoll C.R."/>
            <person name="Alvigini L."/>
            <person name="Gottinger A."/>
            <person name="Cecchini D."/>
            <person name="Mannucci B."/>
            <person name="Corana F."/>
            <person name="Mascotti M.L."/>
            <person name="Mattevi A."/>
        </authorList>
    </citation>
    <scope>FUNCTION</scope>
    <scope>CATALYTIC ACTIVITY</scope>
</reference>
<reference key="12">
    <citation type="journal article" date="2017" name="Am. J. Hum. Genet.">
        <title>FDXR Mutations Cause Sensorial Neuropathies and Expand the Spectrum of Mitochondrial Fe-S-Synthesis Diseases.</title>
        <authorList>
            <person name="Paul A."/>
            <person name="Drecourt A."/>
            <person name="Petit F."/>
            <person name="Deguine D.D."/>
            <person name="Vasnier C."/>
            <person name="Oufadem M."/>
            <person name="Masson C."/>
            <person name="Bonnet C."/>
            <person name="Masmoudi S."/>
            <person name="Mosnier I."/>
            <person name="Mahieu L."/>
            <person name="Bouccara D."/>
            <person name="Kaplan J."/>
            <person name="Challe G."/>
            <person name="Domange C."/>
            <person name="Mochel F."/>
            <person name="Sterkers O."/>
            <person name="Gerber S."/>
            <person name="Nitschke P."/>
            <person name="Bole-Feysot C."/>
            <person name="Jonard L."/>
            <person name="Gherbi S."/>
            <person name="Mercati O."/>
            <person name="Ben Aissa I."/>
            <person name="Lyonnet S."/>
            <person name="Roetig A."/>
            <person name="Delahodde A."/>
            <person name="Marlin S."/>
        </authorList>
    </citation>
    <scope>INVOLVEMENT IN ANOA</scope>
    <scope>VARIANTS ANOA VAL-215; TRP-242; CYS-306; SER-327 AND 419-GLN--HIS-491 DEL</scope>
</reference>
<reference key="13">
    <citation type="journal article" date="2017" name="Hum. Mol. Genet.">
        <title>Biallelic mutations in the ferredoxin reductase gene cause novel mitochondriopathy with optic atrophy.</title>
        <authorList>
            <person name="Peng Y."/>
            <person name="Shinde D.N."/>
            <person name="Valencia C.A."/>
            <person name="Mo J.S."/>
            <person name="Rosenfeld J."/>
            <person name="Truitt Cho M."/>
            <person name="Chamberlin A."/>
            <person name="Li Z."/>
            <person name="Liu J."/>
            <person name="Gui B."/>
            <person name="Brockhage R."/>
            <person name="Basinger A."/>
            <person name="Alvarez-Leon B."/>
            <person name="Heydemann P."/>
            <person name="Magoulas P.L."/>
            <person name="Lewis A.M."/>
            <person name="Scaglia F."/>
            <person name="Gril S."/>
            <person name="Chong S.C."/>
            <person name="Bower M."/>
            <person name="Monaghan K.G."/>
            <person name="Willaert R."/>
            <person name="Plona M.R."/>
            <person name="Dineen R."/>
            <person name="Milan F."/>
            <person name="Hoganson G."/>
            <person name="Powis Z."/>
            <person name="Helbig K.L."/>
            <person name="Keller-Ramey J."/>
            <person name="Harris B."/>
            <person name="Anderson L.C."/>
            <person name="Green T."/>
            <person name="Sukoff Rizzo S.J."/>
            <person name="Kaylor J."/>
            <person name="Chen J."/>
            <person name="Guan M.X."/>
            <person name="Sellars E."/>
            <person name="Sparagana S.P."/>
            <person name="Gibson J.B."/>
            <person name="Reinholdt L.G."/>
            <person name="Tang S."/>
            <person name="Huang T."/>
        </authorList>
    </citation>
    <scope>SUBCELLULAR LOCATION</scope>
    <scope>VARIANTS MMDS9B LEU-51; LEU-74; PHE-143; MET-158; ALA-205; PHE-207; 274-LYS--HIS-491 DEL; TYR-353; ASN-368; TRP-386; SER-437 AND CYS-437</scope>
    <scope>CHARACTERIZATION OF VARIANT MMDS9B TRP-386</scope>
    <scope>INVOLVEMENT IN MMDS9B</scope>
</reference>
<reference key="14">
    <citation type="journal article" date="2018" name="Hum. Mol. Genet.">
        <authorList>
            <person name="Peng Y."/>
            <person name="Shinde D.N."/>
            <person name="Alexander Valencia C."/>
            <person name="Mo J.S."/>
            <person name="Rosenfeld J."/>
            <person name="Cho M.T."/>
            <person name="Chamberlin A."/>
            <person name="Li Z."/>
            <person name="Liu J."/>
            <person name="Gui B."/>
        </authorList>
    </citation>
    <scope>ERRATUM OF PUBMED:29040572</scope>
</reference>
<reference key="15">
    <citation type="journal article" date="2018" name="J. Hum. Genet.">
        <title>Biallelic mutations in FDXR cause neurodegeneration associated with inflammation.</title>
        <authorList>
            <person name="Slone J."/>
            <person name="Peng Y."/>
            <person name="Chamberlin A."/>
            <person name="Harris B."/>
            <person name="Kaylor J."/>
            <person name="McDonald M.T."/>
            <person name="Lemmon M."/>
            <person name="El-Dairi M.A."/>
            <person name="Tchapyjnikov D."/>
            <person name="Gonzalez-Krellwitz L.A."/>
            <person name="Sellars E.A."/>
            <person name="McConkie-Rosell A."/>
            <person name="Reinholdt L.G."/>
            <person name="Huang T."/>
        </authorList>
    </citation>
    <scope>VARIANTS MMDS9B TRP-155 AND HIS-193</scope>
    <scope>INVOLVEMENT IN MMDS9B</scope>
</reference>
<reference key="16">
    <citation type="journal article" date="2021" name="Hum. Mutat.">
        <title>Expanding the clinical and genetic spectrum of FDXR deficiency by functional validation of variants of uncertain significance.</title>
        <authorList>
            <person name="Stenton S.L."/>
            <person name="Piekutowska-Abramczuk D."/>
            <person name="Kulterer L."/>
            <person name="Kopajtich R."/>
            <person name="Claeys K.G."/>
            <person name="Ciara E."/>
            <person name="Eisen J."/>
            <person name="Ploski R."/>
            <person name="Pronicka E."/>
            <person name="Malczyk K."/>
            <person name="Wagner M."/>
            <person name="Wortmann S.B."/>
            <person name="Prokisch H."/>
        </authorList>
    </citation>
    <scope>VARIANTS MMDS9B TRP-12; SER-109; ALA-111; 189-LEU--ALA-192 DEL; VAL-211; LEU-228; TYR-353; TRP-386 AND GLN-448</scope>
    <scope>INVOLVEMENT IN MMDS9B</scope>
</reference>
<reference key="17">
    <citation type="journal article" date="2023" name="Exp. Eye Res.">
        <title>FDXR-associated disease in a Chinese cohort: Unraveling expanded ocular phenotypes and genetic spectrum.</title>
        <authorList>
            <person name="Wei X."/>
            <person name="Li H."/>
            <person name="Zhu T."/>
            <person name="Yao F."/>
            <person name="Sui R."/>
        </authorList>
    </citation>
    <scope>VARIANTS MMDS9B VAL-128; MET-158; CYS-193; CYS-306 AND LEU-314</scope>
    <scope>INVOLVEMENT IN MMDS9B</scope>
</reference>
<reference key="18">
    <citation type="journal article" date="2023" name="Neurol. Sci.">
        <title>FDXR-associated disease: a challenging differential diagnosis with inflammatory peripheral neuropathy.</title>
        <authorList>
            <person name="Masnada S."/>
            <person name="Previtali R."/>
            <person name="Erba P."/>
            <person name="Beretta E."/>
            <person name="Camporesi A."/>
            <person name="Chiapparini L."/>
            <person name="Doneda C."/>
            <person name="Iascone M."/>
            <person name="Sartorio M.U.A."/>
            <person name="Spaccini L."/>
            <person name="Veggiotti P."/>
            <person name="Osio M."/>
            <person name="Tonduti D."/>
            <person name="Moroni I."/>
        </authorList>
    </citation>
    <scope>VARIANT MMDS9B TRP-155</scope>
    <scope>INVOLVEMENT IN MMDS9B</scope>
</reference>
<feature type="transit peptide" description="Mitochondrion" evidence="1">
    <location>
        <begin position="1"/>
        <end position="32"/>
    </location>
</feature>
<feature type="chain" id="PRO_0000019420" description="NADPH:adrenodoxin oxidoreductase, mitochondrial">
    <location>
        <begin position="33"/>
        <end position="491"/>
    </location>
</feature>
<feature type="binding site" evidence="1">
    <location>
        <position position="49"/>
    </location>
    <ligand>
        <name>FAD</name>
        <dbReference type="ChEBI" id="CHEBI:57692"/>
    </ligand>
</feature>
<feature type="binding site" evidence="1">
    <location>
        <position position="69"/>
    </location>
    <ligand>
        <name>FAD</name>
        <dbReference type="ChEBI" id="CHEBI:57692"/>
    </ligand>
</feature>
<feature type="binding site" evidence="1">
    <location>
        <position position="77"/>
    </location>
    <ligand>
        <name>FAD</name>
        <dbReference type="ChEBI" id="CHEBI:57692"/>
    </ligand>
</feature>
<feature type="binding site" evidence="1">
    <location>
        <position position="113"/>
    </location>
    <ligand>
        <name>FAD</name>
        <dbReference type="ChEBI" id="CHEBI:57692"/>
    </ligand>
</feature>
<feature type="binding site" evidence="1">
    <location>
        <begin position="184"/>
        <end position="187"/>
    </location>
    <ligand>
        <name>NADP(+)</name>
        <dbReference type="ChEBI" id="CHEBI:58349"/>
    </ligand>
</feature>
<feature type="binding site" evidence="1">
    <location>
        <begin position="228"/>
        <end position="229"/>
    </location>
    <ligand>
        <name>NADP(+)</name>
        <dbReference type="ChEBI" id="CHEBI:58349"/>
    </ligand>
</feature>
<feature type="binding site" evidence="1">
    <location>
        <position position="240"/>
    </location>
    <ligand>
        <name>NADP(+)</name>
        <dbReference type="ChEBI" id="CHEBI:58349"/>
    </ligand>
</feature>
<feature type="binding site" evidence="1">
    <location>
        <position position="398"/>
    </location>
    <ligand>
        <name>FAD</name>
        <dbReference type="ChEBI" id="CHEBI:57692"/>
    </ligand>
</feature>
<feature type="binding site" evidence="1">
    <location>
        <begin position="405"/>
        <end position="407"/>
    </location>
    <ligand>
        <name>FAD</name>
        <dbReference type="ChEBI" id="CHEBI:57692"/>
    </ligand>
</feature>
<feature type="binding site" evidence="1">
    <location>
        <position position="405"/>
    </location>
    <ligand>
        <name>NADP(+)</name>
        <dbReference type="ChEBI" id="CHEBI:58349"/>
    </ligand>
</feature>
<feature type="modified residue" description="Phosphoserine" evidence="17">
    <location>
        <position position="310"/>
    </location>
</feature>
<feature type="modified residue" description="Phosphoserine" evidence="17">
    <location>
        <position position="317"/>
    </location>
</feature>
<feature type="splice variant" id="VSP_046669" description="In isoform 4." evidence="13">
    <original>MASRCWRWWGWSAWPRTRLPPAGSTPSFCHHFSTQEKTPQICVVGSGPAGFYTAQHLLK</original>
    <variation>MEDKDRE</variation>
    <location>
        <begin position="1"/>
        <end position="59"/>
    </location>
</feature>
<feature type="splice variant" id="VSP_046670" description="In isoform 7." evidence="13">
    <original>SFCHHFST</original>
    <variation>TFGGSDEVRDPANAKALRNKRRRMQVRVKLGKFQLLLDI</variation>
    <location>
        <begin position="27"/>
        <end position="34"/>
    </location>
</feature>
<feature type="splice variant" id="VSP_045135" description="In isoform 3." evidence="13">
    <original>K</original>
    <variation>KRVEALCSQPRVLNSPALSGEGEDLGASQPLSLDPTSCHPVPQQ</variation>
    <location>
        <position position="59"/>
    </location>
</feature>
<feature type="splice variant" id="VSP_046671" description="In isoform 6." evidence="13">
    <original>K</original>
    <variation>KQ</variation>
    <location>
        <position position="59"/>
    </location>
</feature>
<feature type="splice variant" id="VSP_046672" description="In isoform 6." evidence="13">
    <location>
        <begin position="91"/>
        <end position="131"/>
    </location>
</feature>
<feature type="splice variant" id="VSP_046673" description="In isoform 5." evidence="13">
    <location>
        <begin position="91"/>
        <end position="98"/>
    </location>
</feature>
<feature type="splice variant" id="VSP_003416" description="In isoform Long." evidence="14">
    <original>E</original>
    <variation>EALLLCQ</variation>
    <location>
        <position position="203"/>
    </location>
</feature>
<feature type="sequence variant" id="VAR_025192" description="In dbSNP:rs28365947." evidence="12">
    <original>R</original>
    <variation>L</variation>
    <location>
        <position position="7"/>
    </location>
</feature>
<feature type="sequence variant" id="VAR_089881" description="In MMDS9B; uncertain significance." evidence="8">
    <original>S</original>
    <variation>W</variation>
    <location>
        <position position="12"/>
    </location>
</feature>
<feature type="sequence variant" id="VAR_089882" description="In MMDS9B; uncertain significance." evidence="6">
    <original>F</original>
    <variation>L</variation>
    <location>
        <position position="51"/>
    </location>
</feature>
<feature type="sequence variant" id="VAR_089883" description="In MMDS9B; uncertain significance." evidence="6">
    <original>P</original>
    <variation>L</variation>
    <location>
        <position position="74"/>
    </location>
</feature>
<feature type="sequence variant" id="VAR_089884" description="In MMDS9B; uncertain significance." evidence="8">
    <original>G</original>
    <variation>S</variation>
    <location>
        <position position="109"/>
    </location>
</feature>
<feature type="sequence variant" id="VAR_089885" description="In MMDS9B; uncertain significance." evidence="8">
    <original>V</original>
    <variation>A</variation>
    <location>
        <position position="111"/>
    </location>
</feature>
<feature type="sequence variant" id="VAR_004624" description="In dbSNP:rs690514." evidence="3 4 12">
    <original>R</original>
    <variation>Q</variation>
    <location>
        <position position="123"/>
    </location>
</feature>
<feature type="sequence variant" id="VAR_089886" description="In MMDS9B; uncertain significance." evidence="10">
    <original>A</original>
    <variation>V</variation>
    <location>
        <position position="128"/>
    </location>
</feature>
<feature type="sequence variant" id="VAR_089887" description="In MMDS9B; uncertain significance." evidence="6">
    <original>I</original>
    <variation>F</variation>
    <location>
        <position position="143"/>
    </location>
</feature>
<feature type="sequence variant" id="VAR_089888" description="In MMDS9B; uncertain significance." evidence="7 9">
    <original>R</original>
    <variation>W</variation>
    <location>
        <position position="155"/>
    </location>
</feature>
<feature type="sequence variant" id="VAR_089889" description="In MMDS9B; uncertain significance." evidence="6 10">
    <original>V</original>
    <variation>M</variation>
    <location>
        <position position="158"/>
    </location>
</feature>
<feature type="sequence variant" id="VAR_089890" description="In MMDS9B; uncertain significance." evidence="8">
    <location>
        <begin position="189"/>
        <end position="192"/>
    </location>
</feature>
<feature type="sequence variant" id="VAR_089891" description="In MMDS9B; uncertain significance." evidence="10">
    <original>R</original>
    <variation>C</variation>
    <location>
        <position position="193"/>
    </location>
</feature>
<feature type="sequence variant" id="VAR_089892" description="In MMDS9B; uncertain significance." evidence="7">
    <original>R</original>
    <variation>H</variation>
    <location>
        <position position="193"/>
    </location>
</feature>
<feature type="sequence variant" id="VAR_089893" description="In MMDS9B; uncertain significance." evidence="6">
    <original>T</original>
    <variation>A</variation>
    <location>
        <position position="205"/>
    </location>
</feature>
<feature type="sequence variant" id="VAR_089894" description="In MMDS9B; uncertain significance." evidence="6">
    <original>I</original>
    <variation>F</variation>
    <location>
        <position position="207"/>
    </location>
</feature>
<feature type="sequence variant" id="VAR_089895" description="In MMDS9B; uncertain significance." evidence="8">
    <original>A</original>
    <variation>V</variation>
    <location>
        <position position="211"/>
    </location>
</feature>
<feature type="sequence variant" id="VAR_025193" description="In dbSNP:rs35692345." evidence="12">
    <original>G</original>
    <variation>V</variation>
    <location>
        <position position="213"/>
    </location>
</feature>
<feature type="sequence variant" id="VAR_080376" description="In ANOA." evidence="5">
    <original>L</original>
    <variation>V</variation>
    <location>
        <position position="215"/>
    </location>
</feature>
<feature type="sequence variant" id="VAR_089896" description="In MMDS9B; uncertain significance." evidence="8">
    <original>R</original>
    <variation>L</variation>
    <location>
        <position position="228"/>
    </location>
</feature>
<feature type="sequence variant" id="VAR_080377" description="In ANOA." evidence="5">
    <original>R</original>
    <variation>W</variation>
    <location>
        <position position="242"/>
    </location>
</feature>
<feature type="sequence variant" id="VAR_025194" description="In dbSNP:rs35072974." evidence="12">
    <original>P</original>
    <variation>L</variation>
    <location>
        <position position="248"/>
    </location>
</feature>
<feature type="sequence variant" id="VAR_025195" description="In dbSNP:rs34038065." evidence="12">
    <original>R</original>
    <variation>W</variation>
    <location>
        <position position="251"/>
    </location>
</feature>
<feature type="sequence variant" id="VAR_089897" description="In MMDS9B; likely pathogenic." evidence="6">
    <location>
        <begin position="274"/>
        <end position="491"/>
    </location>
</feature>
<feature type="sequence variant" id="VAR_025196" description="In dbSNP:rs34118765." evidence="12">
    <original>R</original>
    <variation>C</variation>
    <location>
        <position position="301"/>
    </location>
</feature>
<feature type="sequence variant" id="VAR_080378" description="In ANOA and MMDS9B." evidence="5 10">
    <original>R</original>
    <variation>C</variation>
    <location>
        <position position="306"/>
    </location>
</feature>
<feature type="sequence variant" id="VAR_089898" description="In MMDS9B; uncertain significance." evidence="10">
    <original>V</original>
    <variation>L</variation>
    <location>
        <position position="314"/>
    </location>
</feature>
<feature type="sequence variant" id="VAR_080379" description="In ANOA." evidence="5">
    <original>R</original>
    <variation>S</variation>
    <location>
        <position position="327"/>
    </location>
</feature>
<feature type="sequence variant" id="VAR_025197" description="In dbSNP:rs35660143." evidence="12">
    <original>T</original>
    <variation>M</variation>
    <location>
        <position position="345"/>
    </location>
</feature>
<feature type="sequence variant" id="VAR_025198" description="In dbSNP:rs35696549." evidence="12">
    <original>P</original>
    <variation>S</variation>
    <location>
        <position position="352"/>
    </location>
</feature>
<feature type="sequence variant" id="VAR_089899" description="In MMDS9B; uncertain significance." evidence="6 8">
    <original>C</original>
    <variation>Y</variation>
    <location>
        <position position="353"/>
    </location>
</feature>
<feature type="sequence variant" id="VAR_089900" description="In MMDS9B; uncertain significance." evidence="6">
    <original>D</original>
    <variation>N</variation>
    <location>
        <position position="368"/>
    </location>
</feature>
<feature type="sequence variant" id="VAR_089901" description="In MMDS9B; likely pathogenic; decreased NADPH-adrenodoxin reductase activity." evidence="6 8">
    <original>R</original>
    <variation>W</variation>
    <location>
        <position position="386"/>
    </location>
</feature>
<feature type="sequence variant" id="VAR_080380" description="In ANOA." evidence="5">
    <location>
        <begin position="419"/>
        <end position="491"/>
    </location>
</feature>
<feature type="sequence variant" id="VAR_089902" description="In MMDS9B; uncertain significance." evidence="6">
    <original>G</original>
    <variation>C</variation>
    <location>
        <position position="437"/>
    </location>
</feature>
<feature type="sequence variant" id="VAR_089903" description="In MMDS9B; uncertain significance." evidence="6">
    <original>G</original>
    <variation>S</variation>
    <location>
        <position position="437"/>
    </location>
</feature>
<feature type="sequence variant" id="VAR_089904" description="In MMDS9B; uncertain significance." evidence="8">
    <original>R</original>
    <variation>Q</variation>
    <location>
        <position position="448"/>
    </location>
</feature>
<feature type="sequence variant" id="VAR_025199" description="In dbSNP:rs35769464." evidence="12">
    <original>T</original>
    <variation>A</variation>
    <location>
        <position position="472"/>
    </location>
</feature>
<feature type="sequence conflict" description="In Ref. 4; BAG56748." evidence="15" ref="4">
    <original>V</original>
    <variation>G</variation>
    <location>
        <position position="223"/>
    </location>
</feature>
<evidence type="ECO:0000250" key="1">
    <source>
        <dbReference type="UniProtKB" id="P08165"/>
    </source>
</evidence>
<evidence type="ECO:0000250" key="2">
    <source>
        <dbReference type="UniProtKB" id="P48360"/>
    </source>
</evidence>
<evidence type="ECO:0000269" key="3">
    <source>
    </source>
</evidence>
<evidence type="ECO:0000269" key="4">
    <source>
    </source>
</evidence>
<evidence type="ECO:0000269" key="5">
    <source>
    </source>
</evidence>
<evidence type="ECO:0000269" key="6">
    <source>
    </source>
</evidence>
<evidence type="ECO:0000269" key="7">
    <source>
    </source>
</evidence>
<evidence type="ECO:0000269" key="8">
    <source>
    </source>
</evidence>
<evidence type="ECO:0000269" key="9">
    <source>
    </source>
</evidence>
<evidence type="ECO:0000269" key="10">
    <source>
    </source>
</evidence>
<evidence type="ECO:0000269" key="11">
    <source>
    </source>
</evidence>
<evidence type="ECO:0000269" key="12">
    <source ref="3"/>
</evidence>
<evidence type="ECO:0000303" key="13">
    <source>
    </source>
</evidence>
<evidence type="ECO:0000303" key="14">
    <source>
    </source>
</evidence>
<evidence type="ECO:0000305" key="15"/>
<evidence type="ECO:0000312" key="16">
    <source>
        <dbReference type="HGNC" id="HGNC:3642"/>
    </source>
</evidence>
<evidence type="ECO:0007744" key="17">
    <source>
    </source>
</evidence>
<organism>
    <name type="scientific">Homo sapiens</name>
    <name type="common">Human</name>
    <dbReference type="NCBI Taxonomy" id="9606"/>
    <lineage>
        <taxon>Eukaryota</taxon>
        <taxon>Metazoa</taxon>
        <taxon>Chordata</taxon>
        <taxon>Craniata</taxon>
        <taxon>Vertebrata</taxon>
        <taxon>Euteleostomi</taxon>
        <taxon>Mammalia</taxon>
        <taxon>Eutheria</taxon>
        <taxon>Euarchontoglires</taxon>
        <taxon>Primates</taxon>
        <taxon>Haplorrhini</taxon>
        <taxon>Catarrhini</taxon>
        <taxon>Hominidae</taxon>
        <taxon>Homo</taxon>
    </lineage>
</organism>